<feature type="chain" id="PRO_0000297284" description="3-methyl-2-oxobutanoate hydroxymethyltransferase">
    <location>
        <begin position="1"/>
        <end position="275"/>
    </location>
</feature>
<feature type="active site" description="Proton acceptor" evidence="1">
    <location>
        <position position="187"/>
    </location>
</feature>
<feature type="binding site" evidence="1">
    <location>
        <begin position="49"/>
        <end position="50"/>
    </location>
    <ligand>
        <name>3-methyl-2-oxobutanoate</name>
        <dbReference type="ChEBI" id="CHEBI:11851"/>
    </ligand>
</feature>
<feature type="binding site" evidence="1">
    <location>
        <position position="49"/>
    </location>
    <ligand>
        <name>Mg(2+)</name>
        <dbReference type="ChEBI" id="CHEBI:18420"/>
    </ligand>
</feature>
<feature type="binding site" evidence="1">
    <location>
        <position position="88"/>
    </location>
    <ligand>
        <name>3-methyl-2-oxobutanoate</name>
        <dbReference type="ChEBI" id="CHEBI:11851"/>
    </ligand>
</feature>
<feature type="binding site" evidence="1">
    <location>
        <position position="88"/>
    </location>
    <ligand>
        <name>Mg(2+)</name>
        <dbReference type="ChEBI" id="CHEBI:18420"/>
    </ligand>
</feature>
<feature type="binding site" evidence="1">
    <location>
        <position position="118"/>
    </location>
    <ligand>
        <name>3-methyl-2-oxobutanoate</name>
        <dbReference type="ChEBI" id="CHEBI:11851"/>
    </ligand>
</feature>
<feature type="binding site" evidence="1">
    <location>
        <position position="120"/>
    </location>
    <ligand>
        <name>Mg(2+)</name>
        <dbReference type="ChEBI" id="CHEBI:18420"/>
    </ligand>
</feature>
<name>PANB_HYPNA</name>
<organism>
    <name type="scientific">Hyphomonas neptunium (strain ATCC 15444)</name>
    <dbReference type="NCBI Taxonomy" id="228405"/>
    <lineage>
        <taxon>Bacteria</taxon>
        <taxon>Pseudomonadati</taxon>
        <taxon>Pseudomonadota</taxon>
        <taxon>Alphaproteobacteria</taxon>
        <taxon>Hyphomonadales</taxon>
        <taxon>Hyphomonadaceae</taxon>
        <taxon>Hyphomonas</taxon>
    </lineage>
</organism>
<comment type="function">
    <text evidence="1">Catalyzes the reversible reaction in which hydroxymethyl group from 5,10-methylenetetrahydrofolate is transferred onto alpha-ketoisovalerate to form ketopantoate.</text>
</comment>
<comment type="catalytic activity">
    <reaction evidence="1">
        <text>3-methyl-2-oxobutanoate + (6R)-5,10-methylene-5,6,7,8-tetrahydrofolate + H2O = 2-dehydropantoate + (6S)-5,6,7,8-tetrahydrofolate</text>
        <dbReference type="Rhea" id="RHEA:11824"/>
        <dbReference type="ChEBI" id="CHEBI:11561"/>
        <dbReference type="ChEBI" id="CHEBI:11851"/>
        <dbReference type="ChEBI" id="CHEBI:15377"/>
        <dbReference type="ChEBI" id="CHEBI:15636"/>
        <dbReference type="ChEBI" id="CHEBI:57453"/>
        <dbReference type="EC" id="2.1.2.11"/>
    </reaction>
</comment>
<comment type="cofactor">
    <cofactor evidence="1">
        <name>Mg(2+)</name>
        <dbReference type="ChEBI" id="CHEBI:18420"/>
    </cofactor>
    <text evidence="1">Binds 1 Mg(2+) ion per subunit.</text>
</comment>
<comment type="pathway">
    <text evidence="1">Cofactor biosynthesis; (R)-pantothenate biosynthesis; (R)-pantoate from 3-methyl-2-oxobutanoate: step 1/2.</text>
</comment>
<comment type="subunit">
    <text evidence="1">Homodecamer; pentamer of dimers.</text>
</comment>
<comment type="subcellular location">
    <subcellularLocation>
        <location evidence="1">Cytoplasm</location>
    </subcellularLocation>
</comment>
<comment type="similarity">
    <text evidence="1">Belongs to the PanB family.</text>
</comment>
<dbReference type="EC" id="2.1.2.11" evidence="1"/>
<dbReference type="EMBL" id="CP000158">
    <property type="protein sequence ID" value="ABI76074.1"/>
    <property type="molecule type" value="Genomic_DNA"/>
</dbReference>
<dbReference type="RefSeq" id="WP_011645799.1">
    <property type="nucleotide sequence ID" value="NC_008358.1"/>
</dbReference>
<dbReference type="SMR" id="Q0C444"/>
<dbReference type="STRING" id="228405.HNE_0771"/>
<dbReference type="KEGG" id="hne:HNE_0771"/>
<dbReference type="eggNOG" id="COG0413">
    <property type="taxonomic scope" value="Bacteria"/>
</dbReference>
<dbReference type="HOGENOM" id="CLU_036645_1_0_5"/>
<dbReference type="UniPathway" id="UPA00028">
    <property type="reaction ID" value="UER00003"/>
</dbReference>
<dbReference type="Proteomes" id="UP000001959">
    <property type="component" value="Chromosome"/>
</dbReference>
<dbReference type="GO" id="GO:0005737">
    <property type="term" value="C:cytoplasm"/>
    <property type="evidence" value="ECO:0007669"/>
    <property type="project" value="UniProtKB-SubCell"/>
</dbReference>
<dbReference type="GO" id="GO:0003864">
    <property type="term" value="F:3-methyl-2-oxobutanoate hydroxymethyltransferase activity"/>
    <property type="evidence" value="ECO:0007669"/>
    <property type="project" value="UniProtKB-UniRule"/>
</dbReference>
<dbReference type="GO" id="GO:0000287">
    <property type="term" value="F:magnesium ion binding"/>
    <property type="evidence" value="ECO:0007669"/>
    <property type="project" value="TreeGrafter"/>
</dbReference>
<dbReference type="GO" id="GO:0015940">
    <property type="term" value="P:pantothenate biosynthetic process"/>
    <property type="evidence" value="ECO:0007669"/>
    <property type="project" value="UniProtKB-UniRule"/>
</dbReference>
<dbReference type="CDD" id="cd06557">
    <property type="entry name" value="KPHMT-like"/>
    <property type="match status" value="1"/>
</dbReference>
<dbReference type="FunFam" id="3.20.20.60:FF:000003">
    <property type="entry name" value="3-methyl-2-oxobutanoate hydroxymethyltransferase"/>
    <property type="match status" value="1"/>
</dbReference>
<dbReference type="Gene3D" id="3.20.20.60">
    <property type="entry name" value="Phosphoenolpyruvate-binding domains"/>
    <property type="match status" value="1"/>
</dbReference>
<dbReference type="HAMAP" id="MF_00156">
    <property type="entry name" value="PanB"/>
    <property type="match status" value="1"/>
</dbReference>
<dbReference type="InterPro" id="IPR003700">
    <property type="entry name" value="Pantoate_hydroxy_MeTrfase"/>
</dbReference>
<dbReference type="InterPro" id="IPR015813">
    <property type="entry name" value="Pyrv/PenolPyrv_kinase-like_dom"/>
</dbReference>
<dbReference type="InterPro" id="IPR040442">
    <property type="entry name" value="Pyrv_kinase-like_dom_sf"/>
</dbReference>
<dbReference type="NCBIfam" id="TIGR00222">
    <property type="entry name" value="panB"/>
    <property type="match status" value="1"/>
</dbReference>
<dbReference type="NCBIfam" id="NF001452">
    <property type="entry name" value="PRK00311.1"/>
    <property type="match status" value="1"/>
</dbReference>
<dbReference type="PANTHER" id="PTHR20881">
    <property type="entry name" value="3-METHYL-2-OXOBUTANOATE HYDROXYMETHYLTRANSFERASE"/>
    <property type="match status" value="1"/>
</dbReference>
<dbReference type="PANTHER" id="PTHR20881:SF0">
    <property type="entry name" value="3-METHYL-2-OXOBUTANOATE HYDROXYMETHYLTRANSFERASE"/>
    <property type="match status" value="1"/>
</dbReference>
<dbReference type="Pfam" id="PF02548">
    <property type="entry name" value="Pantoate_transf"/>
    <property type="match status" value="1"/>
</dbReference>
<dbReference type="PIRSF" id="PIRSF000388">
    <property type="entry name" value="Pantoate_hydroxy_MeTrfase"/>
    <property type="match status" value="1"/>
</dbReference>
<dbReference type="SUPFAM" id="SSF51621">
    <property type="entry name" value="Phosphoenolpyruvate/pyruvate domain"/>
    <property type="match status" value="1"/>
</dbReference>
<evidence type="ECO:0000255" key="1">
    <source>
        <dbReference type="HAMAP-Rule" id="MF_00156"/>
    </source>
</evidence>
<keyword id="KW-0963">Cytoplasm</keyword>
<keyword id="KW-0460">Magnesium</keyword>
<keyword id="KW-0479">Metal-binding</keyword>
<keyword id="KW-0566">Pantothenate biosynthesis</keyword>
<keyword id="KW-1185">Reference proteome</keyword>
<keyword id="KW-0808">Transferase</keyword>
<proteinExistence type="inferred from homology"/>
<sequence>MSKQTQTTRKTVKDIAAAKGATPLVMLTAYDAPTAAILDPHCDILLVGDSLGMVVHGLPSTVGVTMEMMILHGQAVMRGASQAMVVVDMPFGSYETNADQAFLNAVRIMKETGCQAIKIESGAYAAGQIAHLVERGIPVMGHIGLRPQAINVDGGFRAKGRTEDERDRVIAEARAAADAGAFCIVIEGVAEDLAAAITAEVSCPTIGIGASAACDGQVLVTQDMLGLFDWTPKFVRRYADLREVVDKAAAEYAADVRARRFPGTAETYSLRKQGS</sequence>
<protein>
    <recommendedName>
        <fullName evidence="1">3-methyl-2-oxobutanoate hydroxymethyltransferase</fullName>
        <ecNumber evidence="1">2.1.2.11</ecNumber>
    </recommendedName>
    <alternativeName>
        <fullName evidence="1">Ketopantoate hydroxymethyltransferase</fullName>
        <shortName evidence="1">KPHMT</shortName>
    </alternativeName>
</protein>
<reference key="1">
    <citation type="journal article" date="2006" name="J. Bacteriol.">
        <title>Comparative genomic evidence for a close relationship between the dimorphic prosthecate bacteria Hyphomonas neptunium and Caulobacter crescentus.</title>
        <authorList>
            <person name="Badger J.H."/>
            <person name="Hoover T.R."/>
            <person name="Brun Y.V."/>
            <person name="Weiner R.M."/>
            <person name="Laub M.T."/>
            <person name="Alexandre G."/>
            <person name="Mrazek J."/>
            <person name="Ren Q."/>
            <person name="Paulsen I.T."/>
            <person name="Nelson K.E."/>
            <person name="Khouri H.M."/>
            <person name="Radune D."/>
            <person name="Sosa J."/>
            <person name="Dodson R.J."/>
            <person name="Sullivan S.A."/>
            <person name="Rosovitz M.J."/>
            <person name="Madupu R."/>
            <person name="Brinkac L.M."/>
            <person name="Durkin A.S."/>
            <person name="Daugherty S.C."/>
            <person name="Kothari S.P."/>
            <person name="Giglio M.G."/>
            <person name="Zhou L."/>
            <person name="Haft D.H."/>
            <person name="Selengut J.D."/>
            <person name="Davidsen T.M."/>
            <person name="Yang Q."/>
            <person name="Zafar N."/>
            <person name="Ward N.L."/>
        </authorList>
    </citation>
    <scope>NUCLEOTIDE SEQUENCE [LARGE SCALE GENOMIC DNA]</scope>
    <source>
        <strain>ATCC 15444</strain>
    </source>
</reference>
<accession>Q0C444</accession>
<gene>
    <name evidence="1" type="primary">panB</name>
    <name type="ordered locus">HNE_0771</name>
</gene>